<name>SCPA_LISMF</name>
<accession>Q71Y63</accession>
<protein>
    <recommendedName>
        <fullName evidence="1">Segregation and condensation protein A</fullName>
    </recommendedName>
</protein>
<reference key="1">
    <citation type="journal article" date="2004" name="Nucleic Acids Res.">
        <title>Whole genome comparisons of serotype 4b and 1/2a strains of the food-borne pathogen Listeria monocytogenes reveal new insights into the core genome components of this species.</title>
        <authorList>
            <person name="Nelson K.E."/>
            <person name="Fouts D.E."/>
            <person name="Mongodin E.F."/>
            <person name="Ravel J."/>
            <person name="DeBoy R.T."/>
            <person name="Kolonay J.F."/>
            <person name="Rasko D.A."/>
            <person name="Angiuoli S.V."/>
            <person name="Gill S.R."/>
            <person name="Paulsen I.T."/>
            <person name="Peterson J.D."/>
            <person name="White O."/>
            <person name="Nelson W.C."/>
            <person name="Nierman W.C."/>
            <person name="Beanan M.J."/>
            <person name="Brinkac L.M."/>
            <person name="Daugherty S.C."/>
            <person name="Dodson R.J."/>
            <person name="Durkin A.S."/>
            <person name="Madupu R."/>
            <person name="Haft D.H."/>
            <person name="Selengut J."/>
            <person name="Van Aken S.E."/>
            <person name="Khouri H.M."/>
            <person name="Fedorova N."/>
            <person name="Forberger H.A."/>
            <person name="Tran B."/>
            <person name="Kathariou S."/>
            <person name="Wonderling L.D."/>
            <person name="Uhlich G.A."/>
            <person name="Bayles D.O."/>
            <person name="Luchansky J.B."/>
            <person name="Fraser C.M."/>
        </authorList>
    </citation>
    <scope>NUCLEOTIDE SEQUENCE [LARGE SCALE GENOMIC DNA]</scope>
    <source>
        <strain>F2365</strain>
    </source>
</reference>
<feature type="chain" id="PRO_0000211091" description="Segregation and condensation protein A">
    <location>
        <begin position="1"/>
        <end position="249"/>
    </location>
</feature>
<proteinExistence type="inferred from homology"/>
<comment type="function">
    <text evidence="1">Participates in chromosomal partition during cell division. May act via the formation of a condensin-like complex containing Smc and ScpB that pull DNA away from mid-cell into both cell halves.</text>
</comment>
<comment type="subunit">
    <text evidence="1">Component of a cohesin-like complex composed of ScpA, ScpB and the Smc homodimer, in which ScpA and ScpB bind to the head domain of Smc. The presence of the three proteins is required for the association of the complex with DNA.</text>
</comment>
<comment type="subcellular location">
    <subcellularLocation>
        <location evidence="1">Cytoplasm</location>
    </subcellularLocation>
    <text evidence="1">Associated with two foci at the outer edges of the nucleoid region in young cells, and at four foci within both cell halves in older cells.</text>
</comment>
<comment type="similarity">
    <text evidence="1">Belongs to the ScpA family.</text>
</comment>
<sequence>MVEMNFKVDAFEGPLDLLLHLIGQLEVDIYDIPMAEITDQYMEFVHTMQEMELDVASEYLVMAATLLAIKSKMLLPKQELEIDYDTLEEEEDPRDALVEKLMEYKRFKEAAKELKEKEAERSFYFSKPPMDLAEYDDGTKVAELDVSLNDMLSAFNKMLRRKKLNKPLHTRITTQEISIDQRMDSVLEKLNLQVNHRLRFDELFEEQTKEQLVVTFLALLELMKRKLVEVEQAESFADLYVQGKGEEIS</sequence>
<evidence type="ECO:0000255" key="1">
    <source>
        <dbReference type="HAMAP-Rule" id="MF_01805"/>
    </source>
</evidence>
<gene>
    <name evidence="1" type="primary">scpA</name>
    <name type="ordered locus">LMOf2365_1981</name>
</gene>
<keyword id="KW-0131">Cell cycle</keyword>
<keyword id="KW-0132">Cell division</keyword>
<keyword id="KW-0159">Chromosome partition</keyword>
<keyword id="KW-0963">Cytoplasm</keyword>
<dbReference type="EMBL" id="AE017262">
    <property type="protein sequence ID" value="AAT04751.1"/>
    <property type="molecule type" value="Genomic_DNA"/>
</dbReference>
<dbReference type="RefSeq" id="WP_003723598.1">
    <property type="nucleotide sequence ID" value="NC_002973.6"/>
</dbReference>
<dbReference type="SMR" id="Q71Y63"/>
<dbReference type="KEGG" id="lmf:LMOf2365_1981"/>
<dbReference type="HOGENOM" id="CLU_038686_3_1_9"/>
<dbReference type="GO" id="GO:0005737">
    <property type="term" value="C:cytoplasm"/>
    <property type="evidence" value="ECO:0007669"/>
    <property type="project" value="UniProtKB-SubCell"/>
</dbReference>
<dbReference type="GO" id="GO:0051301">
    <property type="term" value="P:cell division"/>
    <property type="evidence" value="ECO:0007669"/>
    <property type="project" value="UniProtKB-KW"/>
</dbReference>
<dbReference type="GO" id="GO:0007059">
    <property type="term" value="P:chromosome segregation"/>
    <property type="evidence" value="ECO:0007669"/>
    <property type="project" value="UniProtKB-UniRule"/>
</dbReference>
<dbReference type="GO" id="GO:0006260">
    <property type="term" value="P:DNA replication"/>
    <property type="evidence" value="ECO:0007669"/>
    <property type="project" value="UniProtKB-UniRule"/>
</dbReference>
<dbReference type="Gene3D" id="6.10.250.2410">
    <property type="match status" value="1"/>
</dbReference>
<dbReference type="Gene3D" id="1.10.10.580">
    <property type="entry name" value="Structural maintenance of chromosome 1. Chain E"/>
    <property type="match status" value="1"/>
</dbReference>
<dbReference type="HAMAP" id="MF_01805">
    <property type="entry name" value="ScpA"/>
    <property type="match status" value="1"/>
</dbReference>
<dbReference type="InterPro" id="IPR003768">
    <property type="entry name" value="ScpA"/>
</dbReference>
<dbReference type="InterPro" id="IPR023093">
    <property type="entry name" value="ScpA-like_C"/>
</dbReference>
<dbReference type="NCBIfam" id="NF000995">
    <property type="entry name" value="PRK00104.1-4"/>
    <property type="match status" value="1"/>
</dbReference>
<dbReference type="PANTHER" id="PTHR33969">
    <property type="entry name" value="SEGREGATION AND CONDENSATION PROTEIN A"/>
    <property type="match status" value="1"/>
</dbReference>
<dbReference type="PANTHER" id="PTHR33969:SF2">
    <property type="entry name" value="SEGREGATION AND CONDENSATION PROTEIN A"/>
    <property type="match status" value="1"/>
</dbReference>
<dbReference type="Pfam" id="PF02616">
    <property type="entry name" value="SMC_ScpA"/>
    <property type="match status" value="1"/>
</dbReference>
<organism>
    <name type="scientific">Listeria monocytogenes serotype 4b (strain F2365)</name>
    <dbReference type="NCBI Taxonomy" id="265669"/>
    <lineage>
        <taxon>Bacteria</taxon>
        <taxon>Bacillati</taxon>
        <taxon>Bacillota</taxon>
        <taxon>Bacilli</taxon>
        <taxon>Bacillales</taxon>
        <taxon>Listeriaceae</taxon>
        <taxon>Listeria</taxon>
    </lineage>
</organism>